<name>CLPL_STAAW</name>
<dbReference type="EMBL" id="BA000033">
    <property type="protein sequence ID" value="BAB96334.1"/>
    <property type="molecule type" value="Genomic_DNA"/>
</dbReference>
<dbReference type="RefSeq" id="WP_001058988.1">
    <property type="nucleotide sequence ID" value="NC_003923.1"/>
</dbReference>
<dbReference type="SMR" id="Q8NUR7"/>
<dbReference type="KEGG" id="sam:MW2469"/>
<dbReference type="HOGENOM" id="CLU_005070_4_3_9"/>
<dbReference type="GO" id="GO:0005737">
    <property type="term" value="C:cytoplasm"/>
    <property type="evidence" value="ECO:0007669"/>
    <property type="project" value="TreeGrafter"/>
</dbReference>
<dbReference type="GO" id="GO:0005524">
    <property type="term" value="F:ATP binding"/>
    <property type="evidence" value="ECO:0007669"/>
    <property type="project" value="UniProtKB-KW"/>
</dbReference>
<dbReference type="GO" id="GO:0016887">
    <property type="term" value="F:ATP hydrolysis activity"/>
    <property type="evidence" value="ECO:0007669"/>
    <property type="project" value="InterPro"/>
</dbReference>
<dbReference type="GO" id="GO:0034605">
    <property type="term" value="P:cellular response to heat"/>
    <property type="evidence" value="ECO:0007669"/>
    <property type="project" value="TreeGrafter"/>
</dbReference>
<dbReference type="CDD" id="cd00009">
    <property type="entry name" value="AAA"/>
    <property type="match status" value="1"/>
</dbReference>
<dbReference type="CDD" id="cd19499">
    <property type="entry name" value="RecA-like_ClpB_Hsp104-like"/>
    <property type="match status" value="1"/>
</dbReference>
<dbReference type="FunFam" id="3.40.50.300:FF:000025">
    <property type="entry name" value="ATP-dependent Clp protease subunit"/>
    <property type="match status" value="1"/>
</dbReference>
<dbReference type="Gene3D" id="1.10.8.60">
    <property type="match status" value="2"/>
</dbReference>
<dbReference type="Gene3D" id="3.40.50.300">
    <property type="entry name" value="P-loop containing nucleotide triphosphate hydrolases"/>
    <property type="match status" value="2"/>
</dbReference>
<dbReference type="Gene3D" id="4.10.860.10">
    <property type="entry name" value="UVR domain"/>
    <property type="match status" value="1"/>
</dbReference>
<dbReference type="InterPro" id="IPR003593">
    <property type="entry name" value="AAA+_ATPase"/>
</dbReference>
<dbReference type="InterPro" id="IPR003959">
    <property type="entry name" value="ATPase_AAA_core"/>
</dbReference>
<dbReference type="InterPro" id="IPR019489">
    <property type="entry name" value="Clp_ATPase_C"/>
</dbReference>
<dbReference type="InterPro" id="IPR001270">
    <property type="entry name" value="ClpA/B"/>
</dbReference>
<dbReference type="InterPro" id="IPR041546">
    <property type="entry name" value="ClpA/ClpB_AAA_lid"/>
</dbReference>
<dbReference type="InterPro" id="IPR050130">
    <property type="entry name" value="ClpA_ClpB"/>
</dbReference>
<dbReference type="InterPro" id="IPR027417">
    <property type="entry name" value="P-loop_NTPase"/>
</dbReference>
<dbReference type="PANTHER" id="PTHR11638">
    <property type="entry name" value="ATP-DEPENDENT CLP PROTEASE"/>
    <property type="match status" value="1"/>
</dbReference>
<dbReference type="PANTHER" id="PTHR11638:SF188">
    <property type="entry name" value="ATP-DEPENDENT CLP PROTEASE ATP-BINDING SUBUNIT CLPL"/>
    <property type="match status" value="1"/>
</dbReference>
<dbReference type="Pfam" id="PF00004">
    <property type="entry name" value="AAA"/>
    <property type="match status" value="1"/>
</dbReference>
<dbReference type="Pfam" id="PF07724">
    <property type="entry name" value="AAA_2"/>
    <property type="match status" value="1"/>
</dbReference>
<dbReference type="Pfam" id="PF17871">
    <property type="entry name" value="AAA_lid_9"/>
    <property type="match status" value="1"/>
</dbReference>
<dbReference type="Pfam" id="PF10431">
    <property type="entry name" value="ClpB_D2-small"/>
    <property type="match status" value="1"/>
</dbReference>
<dbReference type="PRINTS" id="PR00300">
    <property type="entry name" value="CLPPROTEASEA"/>
</dbReference>
<dbReference type="SMART" id="SM00382">
    <property type="entry name" value="AAA"/>
    <property type="match status" value="2"/>
</dbReference>
<dbReference type="SMART" id="SM01086">
    <property type="entry name" value="ClpB_D2-small"/>
    <property type="match status" value="1"/>
</dbReference>
<dbReference type="SUPFAM" id="SSF52540">
    <property type="entry name" value="P-loop containing nucleoside triphosphate hydrolases"/>
    <property type="match status" value="2"/>
</dbReference>
<accession>Q8NUR7</accession>
<sequence length="701" mass="77836">MNNGFFNSDFDSIFRRMMQDMQGSNQVGNKKYYINGKEVSPEELAQLTQQGGNHSAEQSAQAFQQAAQRQQGQQGGNGNYLEQIGRNLTQEARDGLLDPVIGRDKEIQETAEVLSRRTKNNPILVGEAGVGKTAIVEGLAQAIVEGNVPAAIKDKEIISVDISSLEAGTQYRGAFEENIQKLIEGVKSSQNAVLFFDEIHQIIGSGATGSDSGSKGLSDILKPALSRGEISIIGATTQDEYRNNILKDAALTRRFNEVLVNEPSAKDTVEILKGIREKFEEHHQVKLPDDVLKACVDLSIQYIPQRLLPDKAIDVLDITAAHLSAQSPAVDKVETEKRISELENDKRKAVSAEEYKKADDIQNEIKSLQDKLENSNGEHTAVATVHDISDTIQRLTGIPVSQMDDNDIERLKNISNRLRSKIIGQDQAVEMVSRAIRRNRAGFDDGNRPIGSFLFVGPTGVGKTELAKQLAIDLFGNKDALIRLDMSEYSDTTAVSKMIGTTAGYVGYDDNSNTLTEKVRRNPYSVILFDEIEKANPQILTLLLQVMDDGNLTDGQGNVINFKNTIIICTSNAGFGNGNDAEEKDIMHEMKKFFRPEFLNRFNGIVEFLHLDKDALQDIVNLLLDDVQVTLDKKGITMDVSQDAKDWLIEEGYDEELGARPLRRIVEQQVRDKITDYYLDHTDVKHVDIDVEDNELVVKGK</sequence>
<keyword id="KW-0067">ATP-binding</keyword>
<keyword id="KW-0143">Chaperone</keyword>
<keyword id="KW-0547">Nucleotide-binding</keyword>
<proteinExistence type="inferred from homology"/>
<reference key="1">
    <citation type="journal article" date="2002" name="Lancet">
        <title>Genome and virulence determinants of high virulence community-acquired MRSA.</title>
        <authorList>
            <person name="Baba T."/>
            <person name="Takeuchi F."/>
            <person name="Kuroda M."/>
            <person name="Yuzawa H."/>
            <person name="Aoki K."/>
            <person name="Oguchi A."/>
            <person name="Nagai Y."/>
            <person name="Iwama N."/>
            <person name="Asano K."/>
            <person name="Naimi T."/>
            <person name="Kuroda H."/>
            <person name="Cui L."/>
            <person name="Yamamoto K."/>
            <person name="Hiramatsu K."/>
        </authorList>
    </citation>
    <scope>NUCLEOTIDE SEQUENCE [LARGE SCALE GENOMIC DNA]</scope>
    <source>
        <strain>MW2</strain>
    </source>
</reference>
<comment type="function">
    <text evidence="1">Required for the development of induced thermotolerance.</text>
</comment>
<comment type="similarity">
    <text evidence="4">Belongs to the ClpA/ClpB family. ClpL subfamily.</text>
</comment>
<organism>
    <name type="scientific">Staphylococcus aureus (strain MW2)</name>
    <dbReference type="NCBI Taxonomy" id="196620"/>
    <lineage>
        <taxon>Bacteria</taxon>
        <taxon>Bacillati</taxon>
        <taxon>Bacillota</taxon>
        <taxon>Bacilli</taxon>
        <taxon>Bacillales</taxon>
        <taxon>Staphylococcaceae</taxon>
        <taxon>Staphylococcus</taxon>
    </lineage>
</organism>
<evidence type="ECO:0000250" key="1"/>
<evidence type="ECO:0000255" key="2"/>
<evidence type="ECO:0000256" key="3">
    <source>
        <dbReference type="SAM" id="MobiDB-lite"/>
    </source>
</evidence>
<evidence type="ECO:0000305" key="4"/>
<feature type="chain" id="PRO_0000269502" description="ATP-dependent Clp protease ATP-binding subunit ClpL">
    <location>
        <begin position="1"/>
        <end position="701"/>
    </location>
</feature>
<feature type="domain" description="UVR">
    <location>
        <begin position="336"/>
        <end position="371"/>
    </location>
</feature>
<feature type="region of interest" description="Disordered" evidence="3">
    <location>
        <begin position="47"/>
        <end position="79"/>
    </location>
</feature>
<feature type="region of interest" description="I">
    <location>
        <begin position="81"/>
        <end position="332"/>
    </location>
</feature>
<feature type="region of interest" description="II">
    <location>
        <begin position="383"/>
        <end position="575"/>
    </location>
</feature>
<feature type="compositionally biased region" description="Polar residues" evidence="3">
    <location>
        <begin position="47"/>
        <end position="57"/>
    </location>
</feature>
<feature type="compositionally biased region" description="Low complexity" evidence="3">
    <location>
        <begin position="58"/>
        <end position="72"/>
    </location>
</feature>
<feature type="binding site" evidence="2">
    <location>
        <begin position="126"/>
        <end position="133"/>
    </location>
    <ligand>
        <name>ATP</name>
        <dbReference type="ChEBI" id="CHEBI:30616"/>
    </ligand>
</feature>
<feature type="binding site" evidence="2">
    <location>
        <begin position="457"/>
        <end position="464"/>
    </location>
    <ligand>
        <name>ATP</name>
        <dbReference type="ChEBI" id="CHEBI:30616"/>
    </ligand>
</feature>
<gene>
    <name type="primary">clpL</name>
    <name type="ordered locus">MW2469</name>
</gene>
<protein>
    <recommendedName>
        <fullName>ATP-dependent Clp protease ATP-binding subunit ClpL</fullName>
    </recommendedName>
</protein>